<protein>
    <recommendedName>
        <fullName evidence="1">tRNA uridine 5-carboxymethylaminomethyl modification enzyme MnmG</fullName>
    </recommendedName>
    <alternativeName>
        <fullName evidence="1">Glucose-inhibited division protein A</fullName>
    </alternativeName>
</protein>
<sequence length="597" mass="65318">MAGYDVVVVGGGHAGLEAAWAAAALGVRVALVTVNPDRIGMMPCNPAVGGPGKSQLVAEVVALGGLMGRAADAAAIHTRVLNRSKGPAVQSLRVQVDRDLYALKAQEILAERPVEVLRGEVAALWVEGGRLLGVRTVDGRTLPAKAVVVAGGTFLSGVVWYGRKSRPAGRQGEPPARFLSQSLKAVGHTLRRFKTGTPPRIRADSVDFGRLEVVPPEVPPGSFTGNPGPHAARLPTWQTRTTERTHRLILENLHLSPLYAGDIQGIGPRYCPSIEDKVVRFADKESHLLFVEPDGLSTTEVYLQGFSSSLPPELQEEMVRSLPGFERAVIQRYAYAVEYDSLDPTELTRGLQSRFLPGLFSAGQVNGTSGYEEAAAQGLLAGLNAARFALGLPEVHLPRESGYIGVLVDDLVGRGTDEPYRMMTSRVELRLLCRADNADERLTPLAVAWGLRPREDLERVEAKYRRVAAELRRLEALRVEGVSGLQWLRRPENTYRALAERFPPPEPLSPEEAYQVEVRAKYAGYIERQERLREKMRDLEAFRIPEGMDFPKVPGLSREAAEKLSRHRPKSLAEAARIPGVRDSDLTALAVHLRRGA</sequence>
<comment type="function">
    <text evidence="1">NAD-binding protein involved in the addition of a carboxymethylaminomethyl (cmnm) group at the wobble position (U34) of certain tRNAs, forming tRNA-cmnm(5)s(2)U34.</text>
</comment>
<comment type="cofactor">
    <cofactor evidence="1">
        <name>FAD</name>
        <dbReference type="ChEBI" id="CHEBI:57692"/>
    </cofactor>
</comment>
<comment type="subunit">
    <text evidence="1">Homodimer. Heterotetramer of two MnmE and two MnmG subunits.</text>
</comment>
<comment type="subcellular location">
    <subcellularLocation>
        <location evidence="1">Cytoplasm</location>
    </subcellularLocation>
</comment>
<comment type="similarity">
    <text evidence="1">Belongs to the MnmG family.</text>
</comment>
<feature type="chain" id="PRO_0000117203" description="tRNA uridine 5-carboxymethylaminomethyl modification enzyme MnmG">
    <location>
        <begin position="1"/>
        <end position="597"/>
    </location>
</feature>
<feature type="binding site" evidence="1">
    <location>
        <begin position="10"/>
        <end position="15"/>
    </location>
    <ligand>
        <name>FAD</name>
        <dbReference type="ChEBI" id="CHEBI:57692"/>
    </ligand>
</feature>
<feature type="binding site" evidence="1">
    <location>
        <begin position="267"/>
        <end position="281"/>
    </location>
    <ligand>
        <name>NAD(+)</name>
        <dbReference type="ChEBI" id="CHEBI:57540"/>
    </ligand>
</feature>
<accession>Q72H88</accession>
<reference key="1">
    <citation type="journal article" date="2004" name="Nat. Biotechnol.">
        <title>The genome sequence of the extreme thermophile Thermus thermophilus.</title>
        <authorList>
            <person name="Henne A."/>
            <person name="Brueggemann H."/>
            <person name="Raasch C."/>
            <person name="Wiezer A."/>
            <person name="Hartsch T."/>
            <person name="Liesegang H."/>
            <person name="Johann A."/>
            <person name="Lienard T."/>
            <person name="Gohl O."/>
            <person name="Martinez-Arias R."/>
            <person name="Jacobi C."/>
            <person name="Starkuviene V."/>
            <person name="Schlenczeck S."/>
            <person name="Dencker S."/>
            <person name="Huber R."/>
            <person name="Klenk H.-P."/>
            <person name="Kramer W."/>
            <person name="Merkl R."/>
            <person name="Gottschalk G."/>
            <person name="Fritz H.-J."/>
        </authorList>
    </citation>
    <scope>NUCLEOTIDE SEQUENCE [LARGE SCALE GENOMIC DNA]</scope>
    <source>
        <strain>ATCC BAA-163 / DSM 7039 / HB27</strain>
    </source>
</reference>
<dbReference type="EMBL" id="AE017221">
    <property type="protein sequence ID" value="AAS81949.1"/>
    <property type="molecule type" value="Genomic_DNA"/>
</dbReference>
<dbReference type="RefSeq" id="WP_011173978.1">
    <property type="nucleotide sequence ID" value="NC_005835.1"/>
</dbReference>
<dbReference type="SMR" id="Q72H88"/>
<dbReference type="KEGG" id="tth:TT_C1607"/>
<dbReference type="eggNOG" id="COG0445">
    <property type="taxonomic scope" value="Bacteria"/>
</dbReference>
<dbReference type="HOGENOM" id="CLU_007831_2_2_0"/>
<dbReference type="OrthoDB" id="9815560at2"/>
<dbReference type="Proteomes" id="UP000000592">
    <property type="component" value="Chromosome"/>
</dbReference>
<dbReference type="GO" id="GO:0005829">
    <property type="term" value="C:cytosol"/>
    <property type="evidence" value="ECO:0007669"/>
    <property type="project" value="TreeGrafter"/>
</dbReference>
<dbReference type="GO" id="GO:0050660">
    <property type="term" value="F:flavin adenine dinucleotide binding"/>
    <property type="evidence" value="ECO:0007669"/>
    <property type="project" value="UniProtKB-UniRule"/>
</dbReference>
<dbReference type="GO" id="GO:0030488">
    <property type="term" value="P:tRNA methylation"/>
    <property type="evidence" value="ECO:0007669"/>
    <property type="project" value="TreeGrafter"/>
</dbReference>
<dbReference type="GO" id="GO:0002098">
    <property type="term" value="P:tRNA wobble uridine modification"/>
    <property type="evidence" value="ECO:0007669"/>
    <property type="project" value="InterPro"/>
</dbReference>
<dbReference type="FunFam" id="1.10.150.570:FF:000001">
    <property type="entry name" value="tRNA uridine 5-carboxymethylaminomethyl modification enzyme MnmG"/>
    <property type="match status" value="1"/>
</dbReference>
<dbReference type="Gene3D" id="3.50.50.60">
    <property type="entry name" value="FAD/NAD(P)-binding domain"/>
    <property type="match status" value="2"/>
</dbReference>
<dbReference type="Gene3D" id="1.10.150.570">
    <property type="entry name" value="GidA associated domain, C-terminal subdomain"/>
    <property type="match status" value="1"/>
</dbReference>
<dbReference type="Gene3D" id="1.10.10.1800">
    <property type="entry name" value="tRNA uridine 5-carboxymethylaminomethyl modification enzyme MnmG/GidA"/>
    <property type="match status" value="1"/>
</dbReference>
<dbReference type="HAMAP" id="MF_00129">
    <property type="entry name" value="MnmG_GidA"/>
    <property type="match status" value="1"/>
</dbReference>
<dbReference type="InterPro" id="IPR036188">
    <property type="entry name" value="FAD/NAD-bd_sf"/>
</dbReference>
<dbReference type="InterPro" id="IPR049312">
    <property type="entry name" value="GIDA_C_N"/>
</dbReference>
<dbReference type="InterPro" id="IPR004416">
    <property type="entry name" value="MnmG"/>
</dbReference>
<dbReference type="InterPro" id="IPR002218">
    <property type="entry name" value="MnmG-rel"/>
</dbReference>
<dbReference type="InterPro" id="IPR020595">
    <property type="entry name" value="MnmG-rel_CS"/>
</dbReference>
<dbReference type="InterPro" id="IPR026904">
    <property type="entry name" value="MnmG_C"/>
</dbReference>
<dbReference type="InterPro" id="IPR047001">
    <property type="entry name" value="MnmG_C_subdom"/>
</dbReference>
<dbReference type="InterPro" id="IPR044920">
    <property type="entry name" value="MnmG_C_subdom_sf"/>
</dbReference>
<dbReference type="InterPro" id="IPR040131">
    <property type="entry name" value="MnmG_N"/>
</dbReference>
<dbReference type="NCBIfam" id="TIGR00136">
    <property type="entry name" value="mnmG_gidA"/>
    <property type="match status" value="1"/>
</dbReference>
<dbReference type="PANTHER" id="PTHR11806">
    <property type="entry name" value="GLUCOSE INHIBITED DIVISION PROTEIN A"/>
    <property type="match status" value="1"/>
</dbReference>
<dbReference type="PANTHER" id="PTHR11806:SF0">
    <property type="entry name" value="PROTEIN MTO1 HOMOLOG, MITOCHONDRIAL"/>
    <property type="match status" value="1"/>
</dbReference>
<dbReference type="Pfam" id="PF01134">
    <property type="entry name" value="GIDA"/>
    <property type="match status" value="1"/>
</dbReference>
<dbReference type="Pfam" id="PF21680">
    <property type="entry name" value="GIDA_C_1st"/>
    <property type="match status" value="1"/>
</dbReference>
<dbReference type="Pfam" id="PF13932">
    <property type="entry name" value="SAM_GIDA_C"/>
    <property type="match status" value="1"/>
</dbReference>
<dbReference type="SMART" id="SM01228">
    <property type="entry name" value="GIDA_assoc_3"/>
    <property type="match status" value="1"/>
</dbReference>
<dbReference type="SUPFAM" id="SSF51905">
    <property type="entry name" value="FAD/NAD(P)-binding domain"/>
    <property type="match status" value="1"/>
</dbReference>
<dbReference type="PROSITE" id="PS01280">
    <property type="entry name" value="GIDA_1"/>
    <property type="match status" value="1"/>
</dbReference>
<dbReference type="PROSITE" id="PS01281">
    <property type="entry name" value="GIDA_2"/>
    <property type="match status" value="1"/>
</dbReference>
<proteinExistence type="inferred from homology"/>
<organism>
    <name type="scientific">Thermus thermophilus (strain ATCC BAA-163 / DSM 7039 / HB27)</name>
    <dbReference type="NCBI Taxonomy" id="262724"/>
    <lineage>
        <taxon>Bacteria</taxon>
        <taxon>Thermotogati</taxon>
        <taxon>Deinococcota</taxon>
        <taxon>Deinococci</taxon>
        <taxon>Thermales</taxon>
        <taxon>Thermaceae</taxon>
        <taxon>Thermus</taxon>
    </lineage>
</organism>
<name>MNMG_THET2</name>
<gene>
    <name evidence="1" type="primary">mnmG</name>
    <name evidence="1" type="synonym">gidA</name>
    <name type="ordered locus">TT_C1607</name>
</gene>
<keyword id="KW-0963">Cytoplasm</keyword>
<keyword id="KW-0274">FAD</keyword>
<keyword id="KW-0285">Flavoprotein</keyword>
<keyword id="KW-0520">NAD</keyword>
<keyword id="KW-0819">tRNA processing</keyword>
<evidence type="ECO:0000255" key="1">
    <source>
        <dbReference type="HAMAP-Rule" id="MF_00129"/>
    </source>
</evidence>